<sequence>MEPEVKIERRKTRQVMVGNVPVGGDAPISVQSMTNSETCDVDATVGQIRRLQDAGVDIVRVSVPSMEAAEAFGKIRKQVDVPLVADIHYDYKIALAVAEQGVDCLRINPGNIGREDRIKAVIQCAKDKGLPIRIGVNAGSLEKELQRKYGEPTSDALVESALRHADILDRYDFQNFKVSVKASNVFMTLQAYRKLSSQLEQPLHLGVTEAGTFRSGTVKSAVALGALLMEGIGDTIRVSLAADPVEEVRVGFDILKSLNLRKKGVNIIACPSCSRQNFDVIKTVNELEARLEDINESVDLAVIGCLVNGPGEAREVDVGLTGGTPNNLAYRDGEKSHHITADDLVDELERMVRAKVKKQREDEEKGIIARSE</sequence>
<evidence type="ECO:0000255" key="1">
    <source>
        <dbReference type="HAMAP-Rule" id="MF_00159"/>
    </source>
</evidence>
<reference key="1">
    <citation type="journal article" date="2006" name="Nat. Biotechnol.">
        <title>Genome sequence of the ubiquitous hydrocarbon-degrading marine bacterium Alcanivorax borkumensis.</title>
        <authorList>
            <person name="Schneiker S."/>
            <person name="Martins dos Santos V.A.P."/>
            <person name="Bartels D."/>
            <person name="Bekel T."/>
            <person name="Brecht M."/>
            <person name="Buhrmester J."/>
            <person name="Chernikova T.N."/>
            <person name="Denaro R."/>
            <person name="Ferrer M."/>
            <person name="Gertler C."/>
            <person name="Goesmann A."/>
            <person name="Golyshina O.V."/>
            <person name="Kaminski F."/>
            <person name="Khachane A.N."/>
            <person name="Lang S."/>
            <person name="Linke B."/>
            <person name="McHardy A.C."/>
            <person name="Meyer F."/>
            <person name="Nechitaylo T."/>
            <person name="Puehler A."/>
            <person name="Regenhardt D."/>
            <person name="Rupp O."/>
            <person name="Sabirova J.S."/>
            <person name="Selbitschka W."/>
            <person name="Yakimov M.M."/>
            <person name="Timmis K.N."/>
            <person name="Vorhoelter F.-J."/>
            <person name="Weidner S."/>
            <person name="Kaiser O."/>
            <person name="Golyshin P.N."/>
        </authorList>
    </citation>
    <scope>NUCLEOTIDE SEQUENCE [LARGE SCALE GENOMIC DNA]</scope>
    <source>
        <strain>ATCC 700651 / DSM 11573 / NCIMB 13689 / SK2</strain>
    </source>
</reference>
<gene>
    <name evidence="1" type="primary">ispG</name>
    <name type="ordered locus">ABO_1860</name>
</gene>
<organism>
    <name type="scientific">Alcanivorax borkumensis (strain ATCC 700651 / DSM 11573 / NCIMB 13689 / SK2)</name>
    <dbReference type="NCBI Taxonomy" id="393595"/>
    <lineage>
        <taxon>Bacteria</taxon>
        <taxon>Pseudomonadati</taxon>
        <taxon>Pseudomonadota</taxon>
        <taxon>Gammaproteobacteria</taxon>
        <taxon>Oceanospirillales</taxon>
        <taxon>Alcanivoracaceae</taxon>
        <taxon>Alcanivorax</taxon>
    </lineage>
</organism>
<keyword id="KW-0004">4Fe-4S</keyword>
<keyword id="KW-0408">Iron</keyword>
<keyword id="KW-0411">Iron-sulfur</keyword>
<keyword id="KW-0414">Isoprene biosynthesis</keyword>
<keyword id="KW-0479">Metal-binding</keyword>
<keyword id="KW-0560">Oxidoreductase</keyword>
<keyword id="KW-1185">Reference proteome</keyword>
<name>ISPG_ALCBS</name>
<feature type="chain" id="PRO_1000011433" description="4-hydroxy-3-methylbut-2-en-1-yl diphosphate synthase (flavodoxin)">
    <location>
        <begin position="1"/>
        <end position="372"/>
    </location>
</feature>
<feature type="binding site" evidence="1">
    <location>
        <position position="270"/>
    </location>
    <ligand>
        <name>[4Fe-4S] cluster</name>
        <dbReference type="ChEBI" id="CHEBI:49883"/>
    </ligand>
</feature>
<feature type="binding site" evidence="1">
    <location>
        <position position="273"/>
    </location>
    <ligand>
        <name>[4Fe-4S] cluster</name>
        <dbReference type="ChEBI" id="CHEBI:49883"/>
    </ligand>
</feature>
<feature type="binding site" evidence="1">
    <location>
        <position position="305"/>
    </location>
    <ligand>
        <name>[4Fe-4S] cluster</name>
        <dbReference type="ChEBI" id="CHEBI:49883"/>
    </ligand>
</feature>
<feature type="binding site" evidence="1">
    <location>
        <position position="312"/>
    </location>
    <ligand>
        <name>[4Fe-4S] cluster</name>
        <dbReference type="ChEBI" id="CHEBI:49883"/>
    </ligand>
</feature>
<comment type="function">
    <text evidence="1">Converts 2C-methyl-D-erythritol 2,4-cyclodiphosphate (ME-2,4cPP) into 1-hydroxy-2-methyl-2-(E)-butenyl 4-diphosphate.</text>
</comment>
<comment type="catalytic activity">
    <reaction evidence="1">
        <text>(2E)-4-hydroxy-3-methylbut-2-enyl diphosphate + oxidized [flavodoxin] + H2O + 2 H(+) = 2-C-methyl-D-erythritol 2,4-cyclic diphosphate + reduced [flavodoxin]</text>
        <dbReference type="Rhea" id="RHEA:43604"/>
        <dbReference type="Rhea" id="RHEA-COMP:10622"/>
        <dbReference type="Rhea" id="RHEA-COMP:10623"/>
        <dbReference type="ChEBI" id="CHEBI:15377"/>
        <dbReference type="ChEBI" id="CHEBI:15378"/>
        <dbReference type="ChEBI" id="CHEBI:57618"/>
        <dbReference type="ChEBI" id="CHEBI:58210"/>
        <dbReference type="ChEBI" id="CHEBI:58483"/>
        <dbReference type="ChEBI" id="CHEBI:128753"/>
        <dbReference type="EC" id="1.17.7.3"/>
    </reaction>
</comment>
<comment type="cofactor">
    <cofactor evidence="1">
        <name>[4Fe-4S] cluster</name>
        <dbReference type="ChEBI" id="CHEBI:49883"/>
    </cofactor>
    <text evidence="1">Binds 1 [4Fe-4S] cluster.</text>
</comment>
<comment type="pathway">
    <text evidence="1">Isoprenoid biosynthesis; isopentenyl diphosphate biosynthesis via DXP pathway; isopentenyl diphosphate from 1-deoxy-D-xylulose 5-phosphate: step 5/6.</text>
</comment>
<comment type="similarity">
    <text evidence="1">Belongs to the IspG family.</text>
</comment>
<accession>Q0VNE0</accession>
<proteinExistence type="inferred from homology"/>
<dbReference type="EC" id="1.17.7.3" evidence="1"/>
<dbReference type="EMBL" id="AM286690">
    <property type="protein sequence ID" value="CAL17308.1"/>
    <property type="molecule type" value="Genomic_DNA"/>
</dbReference>
<dbReference type="RefSeq" id="WP_011589139.1">
    <property type="nucleotide sequence ID" value="NC_008260.1"/>
</dbReference>
<dbReference type="SMR" id="Q0VNE0"/>
<dbReference type="STRING" id="393595.ABO_1860"/>
<dbReference type="KEGG" id="abo:ABO_1860"/>
<dbReference type="eggNOG" id="COG0821">
    <property type="taxonomic scope" value="Bacteria"/>
</dbReference>
<dbReference type="HOGENOM" id="CLU_042258_0_0_6"/>
<dbReference type="OrthoDB" id="9803214at2"/>
<dbReference type="UniPathway" id="UPA00056">
    <property type="reaction ID" value="UER00096"/>
</dbReference>
<dbReference type="Proteomes" id="UP000008871">
    <property type="component" value="Chromosome"/>
</dbReference>
<dbReference type="GO" id="GO:0051539">
    <property type="term" value="F:4 iron, 4 sulfur cluster binding"/>
    <property type="evidence" value="ECO:0007669"/>
    <property type="project" value="UniProtKB-UniRule"/>
</dbReference>
<dbReference type="GO" id="GO:0046429">
    <property type="term" value="F:4-hydroxy-3-methylbut-2-en-1-yl diphosphate synthase activity (ferredoxin)"/>
    <property type="evidence" value="ECO:0007669"/>
    <property type="project" value="UniProtKB-UniRule"/>
</dbReference>
<dbReference type="GO" id="GO:0141197">
    <property type="term" value="F:4-hydroxy-3-methylbut-2-enyl-diphosphate synthase activity (flavodoxin)"/>
    <property type="evidence" value="ECO:0007669"/>
    <property type="project" value="UniProtKB-EC"/>
</dbReference>
<dbReference type="GO" id="GO:0005506">
    <property type="term" value="F:iron ion binding"/>
    <property type="evidence" value="ECO:0007669"/>
    <property type="project" value="InterPro"/>
</dbReference>
<dbReference type="GO" id="GO:0019288">
    <property type="term" value="P:isopentenyl diphosphate biosynthetic process, methylerythritol 4-phosphate pathway"/>
    <property type="evidence" value="ECO:0007669"/>
    <property type="project" value="UniProtKB-UniRule"/>
</dbReference>
<dbReference type="GO" id="GO:0016114">
    <property type="term" value="P:terpenoid biosynthetic process"/>
    <property type="evidence" value="ECO:0007669"/>
    <property type="project" value="InterPro"/>
</dbReference>
<dbReference type="FunFam" id="3.20.20.20:FF:000001">
    <property type="entry name" value="4-hydroxy-3-methylbut-2-en-1-yl diphosphate synthase (flavodoxin)"/>
    <property type="match status" value="1"/>
</dbReference>
<dbReference type="Gene3D" id="3.20.20.20">
    <property type="entry name" value="Dihydropteroate synthase-like"/>
    <property type="match status" value="1"/>
</dbReference>
<dbReference type="Gene3D" id="3.30.413.10">
    <property type="entry name" value="Sulfite Reductase Hemoprotein, domain 1"/>
    <property type="match status" value="1"/>
</dbReference>
<dbReference type="HAMAP" id="MF_00159">
    <property type="entry name" value="IspG"/>
    <property type="match status" value="1"/>
</dbReference>
<dbReference type="InterPro" id="IPR011005">
    <property type="entry name" value="Dihydropteroate_synth-like_sf"/>
</dbReference>
<dbReference type="InterPro" id="IPR016425">
    <property type="entry name" value="IspG_bac"/>
</dbReference>
<dbReference type="InterPro" id="IPR004588">
    <property type="entry name" value="IspG_bac-typ"/>
</dbReference>
<dbReference type="InterPro" id="IPR045854">
    <property type="entry name" value="NO2/SO3_Rdtase_4Fe4S_sf"/>
</dbReference>
<dbReference type="NCBIfam" id="TIGR00612">
    <property type="entry name" value="ispG_gcpE"/>
    <property type="match status" value="1"/>
</dbReference>
<dbReference type="NCBIfam" id="NF001540">
    <property type="entry name" value="PRK00366.1"/>
    <property type="match status" value="1"/>
</dbReference>
<dbReference type="PANTHER" id="PTHR30454">
    <property type="entry name" value="4-HYDROXY-3-METHYLBUT-2-EN-1-YL DIPHOSPHATE SYNTHASE"/>
    <property type="match status" value="1"/>
</dbReference>
<dbReference type="PANTHER" id="PTHR30454:SF0">
    <property type="entry name" value="4-HYDROXY-3-METHYLBUT-2-EN-1-YL DIPHOSPHATE SYNTHASE (FERREDOXIN), CHLOROPLASTIC"/>
    <property type="match status" value="1"/>
</dbReference>
<dbReference type="Pfam" id="PF04551">
    <property type="entry name" value="GcpE"/>
    <property type="match status" value="1"/>
</dbReference>
<dbReference type="PIRSF" id="PIRSF004640">
    <property type="entry name" value="IspG"/>
    <property type="match status" value="1"/>
</dbReference>
<dbReference type="SUPFAM" id="SSF51717">
    <property type="entry name" value="Dihydropteroate synthetase-like"/>
    <property type="match status" value="1"/>
</dbReference>
<dbReference type="SUPFAM" id="SSF56014">
    <property type="entry name" value="Nitrite and sulphite reductase 4Fe-4S domain-like"/>
    <property type="match status" value="1"/>
</dbReference>
<protein>
    <recommendedName>
        <fullName evidence="1">4-hydroxy-3-methylbut-2-en-1-yl diphosphate synthase (flavodoxin)</fullName>
        <ecNumber evidence="1">1.17.7.3</ecNumber>
    </recommendedName>
    <alternativeName>
        <fullName evidence="1">1-hydroxy-2-methyl-2-(E)-butenyl 4-diphosphate synthase</fullName>
    </alternativeName>
</protein>